<gene>
    <name type="primary">env</name>
</gene>
<name>ENV_FIVWO</name>
<feature type="chain" id="PRO_0000239538" description="Envelope glycoprotein gp150">
    <location>
        <begin position="1"/>
        <end position="854"/>
    </location>
</feature>
<feature type="chain" id="PRO_0000038729" description="Surface protein" evidence="1">
    <location>
        <begin position="1"/>
        <end position="609"/>
    </location>
</feature>
<feature type="chain" id="PRO_0000038730" description="Transmembrane protein" evidence="1">
    <location>
        <begin position="610"/>
        <end position="854"/>
    </location>
</feature>
<feature type="topological domain" description="Extracellular" evidence="2">
    <location>
        <begin position="1"/>
        <end position="783"/>
    </location>
</feature>
<feature type="transmembrane region" description="Helical" evidence="2">
    <location>
        <begin position="784"/>
        <end position="804"/>
    </location>
</feature>
<feature type="topological domain" description="Cytoplasmic" evidence="2">
    <location>
        <begin position="805"/>
        <end position="854"/>
    </location>
</feature>
<feature type="region of interest" description="Fusion peptide" evidence="2">
    <location>
        <begin position="614"/>
        <end position="634"/>
    </location>
</feature>
<feature type="region of interest" description="Immunosuppression" evidence="1">
    <location>
        <begin position="660"/>
        <end position="678"/>
    </location>
</feature>
<feature type="coiled-coil region" evidence="2">
    <location>
        <begin position="641"/>
        <end position="691"/>
    </location>
</feature>
<feature type="coiled-coil region" evidence="2">
    <location>
        <begin position="734"/>
        <end position="770"/>
    </location>
</feature>
<feature type="site" description="Cleavage; by host" evidence="1">
    <location>
        <begin position="609"/>
        <end position="610"/>
    </location>
</feature>
<feature type="glycosylation site" description="N-linked (GlcNAc...) asparagine; by host" evidence="2">
    <location>
        <position position="218"/>
    </location>
</feature>
<feature type="glycosylation site" description="N-linked (GlcNAc...) asparagine; by host" evidence="2">
    <location>
        <position position="256"/>
    </location>
</feature>
<feature type="glycosylation site" description="N-linked (GlcNAc...) asparagine; by host" evidence="2">
    <location>
        <position position="267"/>
    </location>
</feature>
<feature type="glycosylation site" description="N-linked (GlcNAc...) asparagine; by host" evidence="2">
    <location>
        <position position="272"/>
    </location>
</feature>
<feature type="glycosylation site" description="N-linked (GlcNAc...) asparagine; by host" evidence="2">
    <location>
        <position position="296"/>
    </location>
</feature>
<feature type="glycosylation site" description="N-linked (GlcNAc...) asparagine; by host" evidence="2">
    <location>
        <position position="328"/>
    </location>
</feature>
<feature type="glycosylation site" description="N-linked (GlcNAc...) asparagine; by host" evidence="2">
    <location>
        <position position="334"/>
    </location>
</feature>
<feature type="glycosylation site" description="N-linked (GlcNAc...) asparagine; by host" evidence="2">
    <location>
        <position position="340"/>
    </location>
</feature>
<feature type="glycosylation site" description="N-linked (GlcNAc...) asparagine; by host" evidence="2">
    <location>
        <position position="416"/>
    </location>
</feature>
<feature type="glycosylation site" description="N-linked (GlcNAc...) asparagine; by host" evidence="2">
    <location>
        <position position="420"/>
    </location>
</feature>
<feature type="glycosylation site" description="N-linked (GlcNAc...) asparagine; by host" evidence="2">
    <location>
        <position position="479"/>
    </location>
</feature>
<feature type="glycosylation site" description="N-linked (GlcNAc...) asparagine; by host" evidence="2">
    <location>
        <position position="497"/>
    </location>
</feature>
<feature type="glycosylation site" description="N-linked (GlcNAc...) asparagine; by host" evidence="2">
    <location>
        <position position="529"/>
    </location>
</feature>
<feature type="glycosylation site" description="N-linked (GlcNAc...) asparagine; by host" evidence="2">
    <location>
        <position position="546"/>
    </location>
</feature>
<feature type="glycosylation site" description="N-linked (GlcNAc...) asparagine; by host" evidence="2">
    <location>
        <position position="549"/>
    </location>
</feature>
<feature type="glycosylation site" description="N-linked (GlcNAc...) asparagine; by host" evidence="2">
    <location>
        <position position="715"/>
    </location>
</feature>
<feature type="glycosylation site" description="N-linked (GlcNAc...) asparagine; by host" evidence="2">
    <location>
        <position position="719"/>
    </location>
</feature>
<feature type="glycosylation site" description="N-linked (GlcNAc...) asparagine; by host" evidence="2">
    <location>
        <position position="727"/>
    </location>
</feature>
<feature type="glycosylation site" description="N-linked (GlcNAc...) asparagine; by host" evidence="2">
    <location>
        <position position="735"/>
    </location>
</feature>
<dbReference type="EMBL" id="L06312">
    <property type="protein sequence ID" value="AAA43068.1"/>
    <property type="molecule type" value="Genomic_DNA"/>
</dbReference>
<dbReference type="GlyCosmos" id="Q05312">
    <property type="glycosylation" value="19 sites, No reported glycans"/>
</dbReference>
<dbReference type="GO" id="GO:0020002">
    <property type="term" value="C:host cell plasma membrane"/>
    <property type="evidence" value="ECO:0007669"/>
    <property type="project" value="UniProtKB-SubCell"/>
</dbReference>
<dbReference type="GO" id="GO:0016020">
    <property type="term" value="C:membrane"/>
    <property type="evidence" value="ECO:0007669"/>
    <property type="project" value="UniProtKB-KW"/>
</dbReference>
<dbReference type="GO" id="GO:0019031">
    <property type="term" value="C:viral envelope"/>
    <property type="evidence" value="ECO:0007669"/>
    <property type="project" value="UniProtKB-KW"/>
</dbReference>
<dbReference type="GO" id="GO:0055036">
    <property type="term" value="C:virion membrane"/>
    <property type="evidence" value="ECO:0007669"/>
    <property type="project" value="UniProtKB-SubCell"/>
</dbReference>
<dbReference type="GO" id="GO:0005198">
    <property type="term" value="F:structural molecule activity"/>
    <property type="evidence" value="ECO:0007669"/>
    <property type="project" value="InterPro"/>
</dbReference>
<dbReference type="GO" id="GO:0046718">
    <property type="term" value="P:symbiont entry into host cell"/>
    <property type="evidence" value="ECO:0007669"/>
    <property type="project" value="UniProtKB-KW"/>
</dbReference>
<dbReference type="GO" id="GO:0019062">
    <property type="term" value="P:virion attachment to host cell"/>
    <property type="evidence" value="ECO:0007669"/>
    <property type="project" value="UniProtKB-KW"/>
</dbReference>
<dbReference type="CDD" id="cd09909">
    <property type="entry name" value="HIV-1-like_HR1-HR2"/>
    <property type="match status" value="1"/>
</dbReference>
<dbReference type="InterPro" id="IPR018582">
    <property type="entry name" value="Envelope_glycop_lentivirus"/>
</dbReference>
<dbReference type="InterPro" id="IPR000328">
    <property type="entry name" value="GP41-like"/>
</dbReference>
<dbReference type="Pfam" id="PF09590">
    <property type="entry name" value="Env-gp36"/>
    <property type="match status" value="1"/>
</dbReference>
<proteinExistence type="inferred from homology"/>
<evidence type="ECO:0000250" key="1"/>
<evidence type="ECO:0000255" key="2"/>
<organism>
    <name type="scientific">Feline immunodeficiency virus (isolate Wo)</name>
    <name type="common">FIV</name>
    <dbReference type="NCBI Taxonomy" id="45409"/>
    <lineage>
        <taxon>Viruses</taxon>
        <taxon>Riboviria</taxon>
        <taxon>Pararnavirae</taxon>
        <taxon>Artverviricota</taxon>
        <taxon>Revtraviricetes</taxon>
        <taxon>Ortervirales</taxon>
        <taxon>Retroviridae</taxon>
        <taxon>Orthoretrovirinae</taxon>
        <taxon>Lentivirus</taxon>
        <taxon>Feline immunodeficiency virus</taxon>
    </lineage>
</organism>
<reference key="1">
    <citation type="journal article" date="1993" name="Virology">
        <title>Structure and variations of feline immunodeficiency virus envelope glycoproteins.</title>
        <authorList>
            <person name="Pancino G."/>
            <person name="Fossati I."/>
            <person name="Chappey C."/>
            <person name="Castelot S."/>
            <person name="Hurtrel B."/>
            <person name="Maraillon A."/>
            <person name="Klatzmann D."/>
            <person name="Sonigo P."/>
        </authorList>
    </citation>
    <scope>NUCLEOTIDE SEQUENCE [GENOMIC DNA]</scope>
</reference>
<organismHost>
    <name type="scientific">Felidae</name>
    <name type="common">cat family</name>
    <dbReference type="NCBI Taxonomy" id="9681"/>
</organismHost>
<protein>
    <recommendedName>
        <fullName>Envelope glycoprotein gp150</fullName>
    </recommendedName>
    <alternativeName>
        <fullName>Env polyprotein</fullName>
    </alternativeName>
    <component>
        <recommendedName>
            <fullName>Surface protein</fullName>
            <shortName>SU</shortName>
        </recommendedName>
        <alternativeName>
            <fullName>Glycoprotein 100</fullName>
            <shortName>gp100</shortName>
        </alternativeName>
    </component>
    <component>
        <recommendedName>
            <fullName>Transmembrane protein</fullName>
            <shortName>TM</shortName>
        </recommendedName>
        <alternativeName>
            <fullName>Glycoprotein 36</fullName>
            <shortName>gp36</shortName>
        </alternativeName>
    </component>
</protein>
<accession>Q05312</accession>
<keyword id="KW-0165">Cleavage on pair of basic residues</keyword>
<keyword id="KW-0175">Coiled coil</keyword>
<keyword id="KW-1015">Disulfide bond</keyword>
<keyword id="KW-0325">Glycoprotein</keyword>
<keyword id="KW-1032">Host cell membrane</keyword>
<keyword id="KW-1043">Host membrane</keyword>
<keyword id="KW-0945">Host-virus interaction</keyword>
<keyword id="KW-0472">Membrane</keyword>
<keyword id="KW-0812">Transmembrane</keyword>
<keyword id="KW-1133">Transmembrane helix</keyword>
<keyword id="KW-1161">Viral attachment to host cell</keyword>
<keyword id="KW-0261">Viral envelope protein</keyword>
<keyword id="KW-0946">Virion</keyword>
<keyword id="KW-1160">Virus entry into host cell</keyword>
<comment type="function">
    <text evidence="1">The surface protein (SU) attaches the virus to the host cell by binding to its receptor. This interaction triggers the refolding of the transmembrane protein (TM) and is thought to activate its fusogenic potential by unmasking its fusion peptide. Fusion occurs at the host cell plasma membrane (By similarity).</text>
</comment>
<comment type="function">
    <text evidence="1">The transmembrane protein (TM) acts as a class I viral fusion protein. Under the current model, the protein has at least 3 conformational states: pre-fusion native state, pre-hairpin intermediate state, and post-fusion hairpin state. During viral and target cell membrane fusion, the coiled coil regions (heptad repeats) assume a trimer-of-hairpins structure, positioning the fusion peptide in close proximity to the C-terminal region of the ectodomain. The formation of this structure appears to drive apposition and subsequent fusion of viral and target cell membranes. Membranes fusion leads to delivery of the nucleocapsid into the cytoplasm (By similarity).</text>
</comment>
<comment type="subunit">
    <text evidence="1">The mature envelope protein (Env) consists of a trimer of SU-TM heterodimers attached by noncovalent interactions or by a labile interchain disulfide bond.</text>
</comment>
<comment type="subcellular location">
    <molecule>Transmembrane protein</molecule>
    <subcellularLocation>
        <location evidence="1">Virion membrane</location>
        <topology evidence="1">Single-pass type I membrane protein</topology>
    </subcellularLocation>
    <subcellularLocation>
        <location evidence="1">Host cell membrane</location>
        <topology evidence="1">Single-pass type I membrane protein</topology>
    </subcellularLocation>
    <text evidence="1">It is probably concentrated at the site of budding and incorporated into the virions possibly by contacts between the cytoplasmic tail of Env and the N-terminus of Gag.</text>
</comment>
<comment type="subcellular location">
    <molecule>Surface protein</molecule>
    <subcellularLocation>
        <location evidence="1">Virion membrane</location>
        <topology evidence="1">Peripheral membrane protein</topology>
    </subcellularLocation>
    <subcellularLocation>
        <location evidence="1">Host cell membrane</location>
        <topology evidence="1">Peripheral membrane protein</topology>
    </subcellularLocation>
    <text evidence="1">The surface protein is not anchored to the viral envelope, but associates with the extravirion surface through its binding to TM. It is probably concentrated at the site of budding and incorporated into the virions possibly by contacts between the cytoplasmic tail of Env and the N-terminus of Gag (By similarity).</text>
</comment>
<comment type="PTM">
    <text evidence="1">Specific enzymatic cleavages in vivo yield mature proteins. Envelope glycoproteins are synthesized as an inactive precursor that is N-glycosylated and processed likely by host cell furin or by a furin-like protease in the Golgi to yield the mature SU and TM proteins. The cleavage site between SU and TM requires the minimal sequence [KR]-X-[KR]-R (By similarity).</text>
</comment>
<sequence>MAEGFAANRQWIGPEEAEELLDFDIAIQMNEEGPLNPGVNPFRVPGITEAEKQEYCNILQPKLQDLKGKIQEVKLEEGNAGKFRRARFLRYSDETVLSLIHLFIGYCPHLCRRHELGSLRHDIDIEALQEERYNDREKGITDNIKYGKRCLIGTAVLYLLLSLGIIIHTCKAQVVWRLPPLVVPVEESEIIFWDCWAPEEPACQDFLGAMIHLKASTNISIQEGPTLGNWAREIWGTLFKKATRQCRRGRIWRRWNETITGPLGCANNTCYNISVIVPDYQCYLDRVDTWLQGKVNISLCLTGGKMLYNKETKQLSYCTDPLQIPLINYTFGPNQTCMWNTSQIQDPEIPKCGWWNQNAYYNSCRWEHTDVQFQCQRTQSQPGSWIRAISSWKQRNRWEWRPDFESEKVKVSLQCNSTKNLTFAMRSSGDYGEVTGAWIEFGCHRTKSKYHTEARFRIRCRWNVGDNTSLIDTCGETQNVSRANPVDCTMYANRMYNCSLQNGFTMKVDDLIMHFNKTKAVEMYNIAGNWSCKSDLPPTWGYMNCNCTNSTNSGTGIRMACPRNQGILRNWYNPVAGLRQSLEKYQVVKQPDYLVVPGEVMEYKPRRKRAAIHVMLALATVLSMAGAGTGATAIGMVTQYQQVLATHQEAIEKVTEALKINNLRLVTLEHQVLVIGLKVEAMEKFLYTAFAMQELGCNQNQFFCKVPSALWERYNMTINQTIWNHGNITLGEWYNQTKDLQQRFYEIIMDIEQNNVQGKKGLQQLQEWEDWVGWIGNIPQYLKGLLGGILGIGLGMLLLILCLPTLVDCIRNCIHKILGYTVIAMPEVEEEEIQPQMELRRNGRQCGMSEKEEE</sequence>